<keyword id="KW-0030">Aminoacyl-tRNA synthetase</keyword>
<keyword id="KW-0067">ATP-binding</keyword>
<keyword id="KW-0963">Cytoplasm</keyword>
<keyword id="KW-0436">Ligase</keyword>
<keyword id="KW-0547">Nucleotide-binding</keyword>
<keyword id="KW-0648">Protein biosynthesis</keyword>
<keyword id="KW-1185">Reference proteome</keyword>
<comment type="function">
    <text evidence="1">Catalyzes the attachment of serine to tRNA(Ser). Is also able to aminoacylate tRNA(Sec) with serine, to form the misacylated tRNA L-seryl-tRNA(Sec), which will be further converted into selenocysteinyl-tRNA(Sec).</text>
</comment>
<comment type="catalytic activity">
    <reaction evidence="1">
        <text>tRNA(Ser) + L-serine + ATP = L-seryl-tRNA(Ser) + AMP + diphosphate + H(+)</text>
        <dbReference type="Rhea" id="RHEA:12292"/>
        <dbReference type="Rhea" id="RHEA-COMP:9669"/>
        <dbReference type="Rhea" id="RHEA-COMP:9703"/>
        <dbReference type="ChEBI" id="CHEBI:15378"/>
        <dbReference type="ChEBI" id="CHEBI:30616"/>
        <dbReference type="ChEBI" id="CHEBI:33019"/>
        <dbReference type="ChEBI" id="CHEBI:33384"/>
        <dbReference type="ChEBI" id="CHEBI:78442"/>
        <dbReference type="ChEBI" id="CHEBI:78533"/>
        <dbReference type="ChEBI" id="CHEBI:456215"/>
        <dbReference type="EC" id="6.1.1.11"/>
    </reaction>
</comment>
<comment type="catalytic activity">
    <reaction evidence="1">
        <text>tRNA(Sec) + L-serine + ATP = L-seryl-tRNA(Sec) + AMP + diphosphate + H(+)</text>
        <dbReference type="Rhea" id="RHEA:42580"/>
        <dbReference type="Rhea" id="RHEA-COMP:9742"/>
        <dbReference type="Rhea" id="RHEA-COMP:10128"/>
        <dbReference type="ChEBI" id="CHEBI:15378"/>
        <dbReference type="ChEBI" id="CHEBI:30616"/>
        <dbReference type="ChEBI" id="CHEBI:33019"/>
        <dbReference type="ChEBI" id="CHEBI:33384"/>
        <dbReference type="ChEBI" id="CHEBI:78442"/>
        <dbReference type="ChEBI" id="CHEBI:78533"/>
        <dbReference type="ChEBI" id="CHEBI:456215"/>
        <dbReference type="EC" id="6.1.1.11"/>
    </reaction>
</comment>
<comment type="pathway">
    <text evidence="1">Aminoacyl-tRNA biosynthesis; selenocysteinyl-tRNA(Sec) biosynthesis; L-seryl-tRNA(Sec) from L-serine and tRNA(Sec): step 1/1.</text>
</comment>
<comment type="subunit">
    <text evidence="1">Homodimer. The tRNA molecule binds across the dimer.</text>
</comment>
<comment type="subcellular location">
    <subcellularLocation>
        <location evidence="1">Cytoplasm</location>
    </subcellularLocation>
</comment>
<comment type="domain">
    <text evidence="1">Consists of two distinct domains, a catalytic core and a N-terminal extension that is involved in tRNA binding.</text>
</comment>
<comment type="similarity">
    <text evidence="1">Belongs to the class-II aminoacyl-tRNA synthetase family. Type-1 seryl-tRNA synthetase subfamily.</text>
</comment>
<accession>Q81JC4</accession>
<sequence>MLDIKFLRTNFEEVKAKLQHRGEDLTDFGRFEELDTRRRELLVQTEELKSKRNEVSQQISVLKREKKDAEALILEMREVGEKVKDLDNELRTVEEDLERLMLSIPNIPHESAPVGETEDDNVVARTWGEVKEFTYEPKPHWDLATDLGILDFERAGKVTGSRFVFYKGAGARLERALISFMLDLHTDEHGYEEVLPPYMVNRASMTGTGQLPKFEEDAFRIESEDYFLIPTAEVPVTNMHRDEILNKEQLPIRYAAFSSCFRSEAGSAGRDTRGLIRQHQFNKVELVKFVKPEDSYEELEKLTNDAERVLQLLELPYRVMSMCTGDLGFTAAKKYDIEVWIPSYGTYREISSCSNFEAFQARRANIRFRREPNGKPEHVHTLNGSGLAIGRTVAAILENYQQEDGTIIIPEVLRPYMGGKTVIK</sequence>
<gene>
    <name evidence="1" type="primary">serS</name>
    <name type="ordered locus">BC_0017</name>
</gene>
<protein>
    <recommendedName>
        <fullName evidence="1">Serine--tRNA ligase</fullName>
        <ecNumber evidence="1">6.1.1.11</ecNumber>
    </recommendedName>
    <alternativeName>
        <fullName evidence="1">Seryl-tRNA synthetase</fullName>
        <shortName evidence="1">SerRS</shortName>
    </alternativeName>
    <alternativeName>
        <fullName evidence="1">Seryl-tRNA(Ser/Sec) synthetase</fullName>
    </alternativeName>
</protein>
<organism>
    <name type="scientific">Bacillus cereus (strain ATCC 14579 / DSM 31 / CCUG 7414 / JCM 2152 / NBRC 15305 / NCIMB 9373 / NCTC 2599 / NRRL B-3711)</name>
    <dbReference type="NCBI Taxonomy" id="226900"/>
    <lineage>
        <taxon>Bacteria</taxon>
        <taxon>Bacillati</taxon>
        <taxon>Bacillota</taxon>
        <taxon>Bacilli</taxon>
        <taxon>Bacillales</taxon>
        <taxon>Bacillaceae</taxon>
        <taxon>Bacillus</taxon>
        <taxon>Bacillus cereus group</taxon>
    </lineage>
</organism>
<dbReference type="EC" id="6.1.1.11" evidence="1"/>
<dbReference type="EMBL" id="AE016877">
    <property type="protein sequence ID" value="AAP07122.1"/>
    <property type="molecule type" value="Genomic_DNA"/>
</dbReference>
<dbReference type="RefSeq" id="NP_829921.1">
    <property type="nucleotide sequence ID" value="NC_004722.1"/>
</dbReference>
<dbReference type="RefSeq" id="WP_000884187.1">
    <property type="nucleotide sequence ID" value="NZ_CP138336.1"/>
</dbReference>
<dbReference type="SMR" id="Q81JC4"/>
<dbReference type="STRING" id="226900.BC_0017"/>
<dbReference type="KEGG" id="bce:BC0017"/>
<dbReference type="PATRIC" id="fig|226900.8.peg.37"/>
<dbReference type="HOGENOM" id="CLU_023797_1_1_9"/>
<dbReference type="OrthoDB" id="9804647at2"/>
<dbReference type="UniPathway" id="UPA00906">
    <property type="reaction ID" value="UER00895"/>
</dbReference>
<dbReference type="Proteomes" id="UP000001417">
    <property type="component" value="Chromosome"/>
</dbReference>
<dbReference type="GO" id="GO:0005737">
    <property type="term" value="C:cytoplasm"/>
    <property type="evidence" value="ECO:0007669"/>
    <property type="project" value="UniProtKB-SubCell"/>
</dbReference>
<dbReference type="GO" id="GO:0005524">
    <property type="term" value="F:ATP binding"/>
    <property type="evidence" value="ECO:0007669"/>
    <property type="project" value="UniProtKB-UniRule"/>
</dbReference>
<dbReference type="GO" id="GO:0140096">
    <property type="term" value="F:catalytic activity, acting on a protein"/>
    <property type="evidence" value="ECO:0007669"/>
    <property type="project" value="UniProtKB-ARBA"/>
</dbReference>
<dbReference type="GO" id="GO:0004828">
    <property type="term" value="F:serine-tRNA ligase activity"/>
    <property type="evidence" value="ECO:0007669"/>
    <property type="project" value="UniProtKB-UniRule"/>
</dbReference>
<dbReference type="GO" id="GO:0016740">
    <property type="term" value="F:transferase activity"/>
    <property type="evidence" value="ECO:0007669"/>
    <property type="project" value="UniProtKB-ARBA"/>
</dbReference>
<dbReference type="GO" id="GO:0016260">
    <property type="term" value="P:selenocysteine biosynthetic process"/>
    <property type="evidence" value="ECO:0007669"/>
    <property type="project" value="UniProtKB-UniRule"/>
</dbReference>
<dbReference type="GO" id="GO:0006434">
    <property type="term" value="P:seryl-tRNA aminoacylation"/>
    <property type="evidence" value="ECO:0007669"/>
    <property type="project" value="UniProtKB-UniRule"/>
</dbReference>
<dbReference type="CDD" id="cd00770">
    <property type="entry name" value="SerRS_core"/>
    <property type="match status" value="1"/>
</dbReference>
<dbReference type="Gene3D" id="3.30.930.10">
    <property type="entry name" value="Bira Bifunctional Protein, Domain 2"/>
    <property type="match status" value="1"/>
</dbReference>
<dbReference type="Gene3D" id="1.10.287.40">
    <property type="entry name" value="Serine-tRNA synthetase, tRNA binding domain"/>
    <property type="match status" value="1"/>
</dbReference>
<dbReference type="HAMAP" id="MF_00176">
    <property type="entry name" value="Ser_tRNA_synth_type1"/>
    <property type="match status" value="1"/>
</dbReference>
<dbReference type="InterPro" id="IPR002314">
    <property type="entry name" value="aa-tRNA-synt_IIb"/>
</dbReference>
<dbReference type="InterPro" id="IPR006195">
    <property type="entry name" value="aa-tRNA-synth_II"/>
</dbReference>
<dbReference type="InterPro" id="IPR045864">
    <property type="entry name" value="aa-tRNA-synth_II/BPL/LPL"/>
</dbReference>
<dbReference type="InterPro" id="IPR002317">
    <property type="entry name" value="Ser-tRNA-ligase_type_1"/>
</dbReference>
<dbReference type="InterPro" id="IPR015866">
    <property type="entry name" value="Ser-tRNA-synth_1_N"/>
</dbReference>
<dbReference type="InterPro" id="IPR042103">
    <property type="entry name" value="SerRS_1_N_sf"/>
</dbReference>
<dbReference type="InterPro" id="IPR033729">
    <property type="entry name" value="SerRS_core"/>
</dbReference>
<dbReference type="InterPro" id="IPR010978">
    <property type="entry name" value="tRNA-bd_arm"/>
</dbReference>
<dbReference type="NCBIfam" id="TIGR00414">
    <property type="entry name" value="serS"/>
    <property type="match status" value="1"/>
</dbReference>
<dbReference type="PANTHER" id="PTHR43697:SF1">
    <property type="entry name" value="SERINE--TRNA LIGASE"/>
    <property type="match status" value="1"/>
</dbReference>
<dbReference type="PANTHER" id="PTHR43697">
    <property type="entry name" value="SERYL-TRNA SYNTHETASE"/>
    <property type="match status" value="1"/>
</dbReference>
<dbReference type="Pfam" id="PF02403">
    <property type="entry name" value="Seryl_tRNA_N"/>
    <property type="match status" value="1"/>
</dbReference>
<dbReference type="Pfam" id="PF00587">
    <property type="entry name" value="tRNA-synt_2b"/>
    <property type="match status" value="1"/>
</dbReference>
<dbReference type="PIRSF" id="PIRSF001529">
    <property type="entry name" value="Ser-tRNA-synth_IIa"/>
    <property type="match status" value="1"/>
</dbReference>
<dbReference type="PRINTS" id="PR00981">
    <property type="entry name" value="TRNASYNTHSER"/>
</dbReference>
<dbReference type="SUPFAM" id="SSF55681">
    <property type="entry name" value="Class II aaRS and biotin synthetases"/>
    <property type="match status" value="1"/>
</dbReference>
<dbReference type="SUPFAM" id="SSF46589">
    <property type="entry name" value="tRNA-binding arm"/>
    <property type="match status" value="1"/>
</dbReference>
<dbReference type="PROSITE" id="PS50862">
    <property type="entry name" value="AA_TRNA_LIGASE_II"/>
    <property type="match status" value="1"/>
</dbReference>
<evidence type="ECO:0000255" key="1">
    <source>
        <dbReference type="HAMAP-Rule" id="MF_00176"/>
    </source>
</evidence>
<feature type="chain" id="PRO_0000121999" description="Serine--tRNA ligase">
    <location>
        <begin position="1"/>
        <end position="424"/>
    </location>
</feature>
<feature type="binding site" evidence="1">
    <location>
        <begin position="231"/>
        <end position="233"/>
    </location>
    <ligand>
        <name>L-serine</name>
        <dbReference type="ChEBI" id="CHEBI:33384"/>
    </ligand>
</feature>
<feature type="binding site" evidence="1">
    <location>
        <begin position="262"/>
        <end position="264"/>
    </location>
    <ligand>
        <name>ATP</name>
        <dbReference type="ChEBI" id="CHEBI:30616"/>
    </ligand>
</feature>
<feature type="binding site" evidence="1">
    <location>
        <position position="285"/>
    </location>
    <ligand>
        <name>L-serine</name>
        <dbReference type="ChEBI" id="CHEBI:33384"/>
    </ligand>
</feature>
<feature type="binding site" evidence="1">
    <location>
        <begin position="349"/>
        <end position="352"/>
    </location>
    <ligand>
        <name>ATP</name>
        <dbReference type="ChEBI" id="CHEBI:30616"/>
    </ligand>
</feature>
<feature type="binding site" evidence="1">
    <location>
        <position position="385"/>
    </location>
    <ligand>
        <name>L-serine</name>
        <dbReference type="ChEBI" id="CHEBI:33384"/>
    </ligand>
</feature>
<reference key="1">
    <citation type="journal article" date="2003" name="Nature">
        <title>Genome sequence of Bacillus cereus and comparative analysis with Bacillus anthracis.</title>
        <authorList>
            <person name="Ivanova N."/>
            <person name="Sorokin A."/>
            <person name="Anderson I."/>
            <person name="Galleron N."/>
            <person name="Candelon B."/>
            <person name="Kapatral V."/>
            <person name="Bhattacharyya A."/>
            <person name="Reznik G."/>
            <person name="Mikhailova N."/>
            <person name="Lapidus A."/>
            <person name="Chu L."/>
            <person name="Mazur M."/>
            <person name="Goltsman E."/>
            <person name="Larsen N."/>
            <person name="D'Souza M."/>
            <person name="Walunas T."/>
            <person name="Grechkin Y."/>
            <person name="Pusch G."/>
            <person name="Haselkorn R."/>
            <person name="Fonstein M."/>
            <person name="Ehrlich S.D."/>
            <person name="Overbeek R."/>
            <person name="Kyrpides N.C."/>
        </authorList>
    </citation>
    <scope>NUCLEOTIDE SEQUENCE [LARGE SCALE GENOMIC DNA]</scope>
    <source>
        <strain>ATCC 14579 / DSM 31 / CCUG 7414 / JCM 2152 / NBRC 15305 / NCIMB 9373 / NCTC 2599 / NRRL B-3711</strain>
    </source>
</reference>
<proteinExistence type="inferred from homology"/>
<name>SYS_BACCR</name>